<sequence>MALNEQDVARIARLARIELTPDQRGRAQAELNGILHLIERLQAVDTQGVEPLAHPLSAHEDITLRLREDAVSEQATEASRAELLANAPESADGLFLVPKVIE</sequence>
<comment type="function">
    <text evidence="1">Allows the formation of correctly charged Asn-tRNA(Asn) or Gln-tRNA(Gln) through the transamidation of misacylated Asp-tRNA(Asn) or Glu-tRNA(Gln) in organisms which lack either or both of asparaginyl-tRNA or glutaminyl-tRNA synthetases. The reaction takes place in the presence of glutamine and ATP through an activated phospho-Asp-tRNA(Asn) or phospho-Glu-tRNA(Gln).</text>
</comment>
<comment type="catalytic activity">
    <reaction evidence="1">
        <text>L-glutamyl-tRNA(Gln) + L-glutamine + ATP + H2O = L-glutaminyl-tRNA(Gln) + L-glutamate + ADP + phosphate + H(+)</text>
        <dbReference type="Rhea" id="RHEA:17521"/>
        <dbReference type="Rhea" id="RHEA-COMP:9681"/>
        <dbReference type="Rhea" id="RHEA-COMP:9684"/>
        <dbReference type="ChEBI" id="CHEBI:15377"/>
        <dbReference type="ChEBI" id="CHEBI:15378"/>
        <dbReference type="ChEBI" id="CHEBI:29985"/>
        <dbReference type="ChEBI" id="CHEBI:30616"/>
        <dbReference type="ChEBI" id="CHEBI:43474"/>
        <dbReference type="ChEBI" id="CHEBI:58359"/>
        <dbReference type="ChEBI" id="CHEBI:78520"/>
        <dbReference type="ChEBI" id="CHEBI:78521"/>
        <dbReference type="ChEBI" id="CHEBI:456216"/>
    </reaction>
</comment>
<comment type="catalytic activity">
    <reaction evidence="1">
        <text>L-aspartyl-tRNA(Asn) + L-glutamine + ATP + H2O = L-asparaginyl-tRNA(Asn) + L-glutamate + ADP + phosphate + 2 H(+)</text>
        <dbReference type="Rhea" id="RHEA:14513"/>
        <dbReference type="Rhea" id="RHEA-COMP:9674"/>
        <dbReference type="Rhea" id="RHEA-COMP:9677"/>
        <dbReference type="ChEBI" id="CHEBI:15377"/>
        <dbReference type="ChEBI" id="CHEBI:15378"/>
        <dbReference type="ChEBI" id="CHEBI:29985"/>
        <dbReference type="ChEBI" id="CHEBI:30616"/>
        <dbReference type="ChEBI" id="CHEBI:43474"/>
        <dbReference type="ChEBI" id="CHEBI:58359"/>
        <dbReference type="ChEBI" id="CHEBI:78515"/>
        <dbReference type="ChEBI" id="CHEBI:78516"/>
        <dbReference type="ChEBI" id="CHEBI:456216"/>
    </reaction>
</comment>
<comment type="subunit">
    <text evidence="1">Heterotrimer of A, B and C subunits.</text>
</comment>
<comment type="similarity">
    <text evidence="1">Belongs to the GatC family.</text>
</comment>
<comment type="sequence caution" evidence="2">
    <conflict type="erroneous initiation">
        <sequence resource="EMBL-CDS" id="CAE34893"/>
    </conflict>
</comment>
<feature type="chain" id="PRO_0000105278" description="Aspartyl/glutamyl-tRNA(Asn/Gln) amidotransferase subunit C">
    <location>
        <begin position="1"/>
        <end position="102"/>
    </location>
</feature>
<gene>
    <name evidence="1" type="primary">gatC</name>
    <name type="ordered locus">BB4530</name>
</gene>
<name>GATC_BORBR</name>
<accession>Q7WEV2</accession>
<reference key="1">
    <citation type="journal article" date="2003" name="Nat. Genet.">
        <title>Comparative analysis of the genome sequences of Bordetella pertussis, Bordetella parapertussis and Bordetella bronchiseptica.</title>
        <authorList>
            <person name="Parkhill J."/>
            <person name="Sebaihia M."/>
            <person name="Preston A."/>
            <person name="Murphy L.D."/>
            <person name="Thomson N.R."/>
            <person name="Harris D.E."/>
            <person name="Holden M.T.G."/>
            <person name="Churcher C.M."/>
            <person name="Bentley S.D."/>
            <person name="Mungall K.L."/>
            <person name="Cerdeno-Tarraga A.-M."/>
            <person name="Temple L."/>
            <person name="James K.D."/>
            <person name="Harris B."/>
            <person name="Quail M.A."/>
            <person name="Achtman M."/>
            <person name="Atkin R."/>
            <person name="Baker S."/>
            <person name="Basham D."/>
            <person name="Bason N."/>
            <person name="Cherevach I."/>
            <person name="Chillingworth T."/>
            <person name="Collins M."/>
            <person name="Cronin A."/>
            <person name="Davis P."/>
            <person name="Doggett J."/>
            <person name="Feltwell T."/>
            <person name="Goble A."/>
            <person name="Hamlin N."/>
            <person name="Hauser H."/>
            <person name="Holroyd S."/>
            <person name="Jagels K."/>
            <person name="Leather S."/>
            <person name="Moule S."/>
            <person name="Norberczak H."/>
            <person name="O'Neil S."/>
            <person name="Ormond D."/>
            <person name="Price C."/>
            <person name="Rabbinowitsch E."/>
            <person name="Rutter S."/>
            <person name="Sanders M."/>
            <person name="Saunders D."/>
            <person name="Seeger K."/>
            <person name="Sharp S."/>
            <person name="Simmonds M."/>
            <person name="Skelton J."/>
            <person name="Squares R."/>
            <person name="Squares S."/>
            <person name="Stevens K."/>
            <person name="Unwin L."/>
            <person name="Whitehead S."/>
            <person name="Barrell B.G."/>
            <person name="Maskell D.J."/>
        </authorList>
    </citation>
    <scope>NUCLEOTIDE SEQUENCE [LARGE SCALE GENOMIC DNA]</scope>
    <source>
        <strain>ATCC BAA-588 / NCTC 13252 / RB50</strain>
    </source>
</reference>
<evidence type="ECO:0000255" key="1">
    <source>
        <dbReference type="HAMAP-Rule" id="MF_00122"/>
    </source>
</evidence>
<evidence type="ECO:0000305" key="2"/>
<keyword id="KW-0067">ATP-binding</keyword>
<keyword id="KW-0436">Ligase</keyword>
<keyword id="KW-0547">Nucleotide-binding</keyword>
<keyword id="KW-0648">Protein biosynthesis</keyword>
<protein>
    <recommendedName>
        <fullName evidence="1">Aspartyl/glutamyl-tRNA(Asn/Gln) amidotransferase subunit C</fullName>
        <shortName evidence="1">Asp/Glu-ADT subunit C</shortName>
        <ecNumber evidence="1">6.3.5.-</ecNumber>
    </recommendedName>
</protein>
<organism>
    <name type="scientific">Bordetella bronchiseptica (strain ATCC BAA-588 / NCTC 13252 / RB50)</name>
    <name type="common">Alcaligenes bronchisepticus</name>
    <dbReference type="NCBI Taxonomy" id="257310"/>
    <lineage>
        <taxon>Bacteria</taxon>
        <taxon>Pseudomonadati</taxon>
        <taxon>Pseudomonadota</taxon>
        <taxon>Betaproteobacteria</taxon>
        <taxon>Burkholderiales</taxon>
        <taxon>Alcaligenaceae</taxon>
        <taxon>Bordetella</taxon>
    </lineage>
</organism>
<proteinExistence type="inferred from homology"/>
<dbReference type="EC" id="6.3.5.-" evidence="1"/>
<dbReference type="EMBL" id="BX640450">
    <property type="protein sequence ID" value="CAE34893.1"/>
    <property type="status" value="ALT_INIT"/>
    <property type="molecule type" value="Genomic_DNA"/>
</dbReference>
<dbReference type="RefSeq" id="WP_010927140.1">
    <property type="nucleotide sequence ID" value="NC_002927.3"/>
</dbReference>
<dbReference type="SMR" id="Q7WEV2"/>
<dbReference type="KEGG" id="bbr:BB4530"/>
<dbReference type="eggNOG" id="COG0721">
    <property type="taxonomic scope" value="Bacteria"/>
</dbReference>
<dbReference type="HOGENOM" id="CLU_105899_2_2_4"/>
<dbReference type="Proteomes" id="UP000001027">
    <property type="component" value="Chromosome"/>
</dbReference>
<dbReference type="GO" id="GO:0050566">
    <property type="term" value="F:asparaginyl-tRNA synthase (glutamine-hydrolyzing) activity"/>
    <property type="evidence" value="ECO:0007669"/>
    <property type="project" value="RHEA"/>
</dbReference>
<dbReference type="GO" id="GO:0005524">
    <property type="term" value="F:ATP binding"/>
    <property type="evidence" value="ECO:0007669"/>
    <property type="project" value="UniProtKB-KW"/>
</dbReference>
<dbReference type="GO" id="GO:0050567">
    <property type="term" value="F:glutaminyl-tRNA synthase (glutamine-hydrolyzing) activity"/>
    <property type="evidence" value="ECO:0007669"/>
    <property type="project" value="UniProtKB-UniRule"/>
</dbReference>
<dbReference type="GO" id="GO:0070681">
    <property type="term" value="P:glutaminyl-tRNAGln biosynthesis via transamidation"/>
    <property type="evidence" value="ECO:0007669"/>
    <property type="project" value="TreeGrafter"/>
</dbReference>
<dbReference type="GO" id="GO:0006450">
    <property type="term" value="P:regulation of translational fidelity"/>
    <property type="evidence" value="ECO:0007669"/>
    <property type="project" value="InterPro"/>
</dbReference>
<dbReference type="GO" id="GO:0006412">
    <property type="term" value="P:translation"/>
    <property type="evidence" value="ECO:0007669"/>
    <property type="project" value="UniProtKB-UniRule"/>
</dbReference>
<dbReference type="Gene3D" id="1.10.20.60">
    <property type="entry name" value="Glu-tRNAGln amidotransferase C subunit, N-terminal domain"/>
    <property type="match status" value="1"/>
</dbReference>
<dbReference type="HAMAP" id="MF_00122">
    <property type="entry name" value="GatC"/>
    <property type="match status" value="1"/>
</dbReference>
<dbReference type="InterPro" id="IPR036113">
    <property type="entry name" value="Asp/Glu-ADT_sf_sub_c"/>
</dbReference>
<dbReference type="InterPro" id="IPR003837">
    <property type="entry name" value="GatC"/>
</dbReference>
<dbReference type="NCBIfam" id="TIGR00135">
    <property type="entry name" value="gatC"/>
    <property type="match status" value="1"/>
</dbReference>
<dbReference type="PANTHER" id="PTHR15004">
    <property type="entry name" value="GLUTAMYL-TRNA(GLN) AMIDOTRANSFERASE SUBUNIT C, MITOCHONDRIAL"/>
    <property type="match status" value="1"/>
</dbReference>
<dbReference type="PANTHER" id="PTHR15004:SF0">
    <property type="entry name" value="GLUTAMYL-TRNA(GLN) AMIDOTRANSFERASE SUBUNIT C, MITOCHONDRIAL"/>
    <property type="match status" value="1"/>
</dbReference>
<dbReference type="Pfam" id="PF02686">
    <property type="entry name" value="GatC"/>
    <property type="match status" value="1"/>
</dbReference>
<dbReference type="SUPFAM" id="SSF141000">
    <property type="entry name" value="Glu-tRNAGln amidotransferase C subunit"/>
    <property type="match status" value="1"/>
</dbReference>